<evidence type="ECO:0000255" key="1">
    <source>
        <dbReference type="HAMAP-Rule" id="MF_01582"/>
    </source>
</evidence>
<proteinExistence type="inferred from homology"/>
<name>SSTT_PHOPR</name>
<protein>
    <recommendedName>
        <fullName evidence="1">Serine/threonine transporter SstT</fullName>
    </recommendedName>
    <alternativeName>
        <fullName evidence="1">Na(+)/serine-threonine symporter</fullName>
    </alternativeName>
</protein>
<sequence length="411" mass="42226">MSQTQPFLARVANGSLVIQIIVGIVAGILLASVAPESAISVGFLGGLFVSALKAVAPILVFILVASSIANQKKGAHTNMKPIIMLYLFGTLMAALTAVVMSFLFPTTLTLVAGNATASPPEGIAEVLNTLLFKIVDNPVNALMSGNFIGILAWAIALGFALHQASDATKQVFHDMSNGVTSIVRFVIRLAPIGIFGLVANTFAETGFAALAGYAHLLAVLLGSMAVIALVVNPAIVFFKTKENPYPLVFRCIRESGITAFFTRSSAANIPVNMQLCKDLDLHEDTYSVSIPLGATINMAGAAITITVLTLAAVHTMGVEVDIATAVLLSVVAAVSACGASGVAGGSLLLIPLACSLFGIPNEVAMQVVAVGFIIGVIQDSAETALNSSTDVLFTAAACKAAEAKVASPNIA</sequence>
<comment type="function">
    <text evidence="1">Involved in the import of serine and threonine into the cell, with the concomitant import of sodium (symport system).</text>
</comment>
<comment type="catalytic activity">
    <reaction evidence="1">
        <text>L-serine(in) + Na(+)(in) = L-serine(out) + Na(+)(out)</text>
        <dbReference type="Rhea" id="RHEA:29575"/>
        <dbReference type="ChEBI" id="CHEBI:29101"/>
        <dbReference type="ChEBI" id="CHEBI:33384"/>
    </reaction>
    <physiologicalReaction direction="right-to-left" evidence="1">
        <dbReference type="Rhea" id="RHEA:29577"/>
    </physiologicalReaction>
</comment>
<comment type="catalytic activity">
    <reaction evidence="1">
        <text>L-threonine(in) + Na(+)(in) = L-threonine(out) + Na(+)(out)</text>
        <dbReference type="Rhea" id="RHEA:69999"/>
        <dbReference type="ChEBI" id="CHEBI:29101"/>
        <dbReference type="ChEBI" id="CHEBI:57926"/>
    </reaction>
    <physiologicalReaction direction="right-to-left" evidence="1">
        <dbReference type="Rhea" id="RHEA:70001"/>
    </physiologicalReaction>
</comment>
<comment type="subcellular location">
    <subcellularLocation>
        <location evidence="1">Cell inner membrane</location>
        <topology evidence="1">Multi-pass membrane protein</topology>
    </subcellularLocation>
</comment>
<comment type="similarity">
    <text evidence="1">Belongs to the dicarboxylate/amino acid:cation symporter (DAACS) (TC 2.A.23) family.</text>
</comment>
<feature type="chain" id="PRO_0000309104" description="Serine/threonine transporter SstT">
    <location>
        <begin position="1"/>
        <end position="411"/>
    </location>
</feature>
<feature type="transmembrane region" description="Helical" evidence="1">
    <location>
        <begin position="14"/>
        <end position="34"/>
    </location>
</feature>
<feature type="transmembrane region" description="Helical" evidence="1">
    <location>
        <begin position="43"/>
        <end position="63"/>
    </location>
</feature>
<feature type="transmembrane region" description="Helical" evidence="1">
    <location>
        <begin position="82"/>
        <end position="102"/>
    </location>
</feature>
<feature type="transmembrane region" description="Helical" evidence="1">
    <location>
        <begin position="141"/>
        <end position="161"/>
    </location>
</feature>
<feature type="transmembrane region" description="Helical" evidence="1">
    <location>
        <begin position="192"/>
        <end position="212"/>
    </location>
</feature>
<feature type="transmembrane region" description="Helical" evidence="1">
    <location>
        <begin position="218"/>
        <end position="238"/>
    </location>
</feature>
<feature type="transmembrane region" description="Helical" evidence="1">
    <location>
        <begin position="290"/>
        <end position="310"/>
    </location>
</feature>
<feature type="transmembrane region" description="Helical" evidence="1">
    <location>
        <begin position="330"/>
        <end position="350"/>
    </location>
</feature>
<feature type="transmembrane region" description="Helical" evidence="1">
    <location>
        <begin position="357"/>
        <end position="377"/>
    </location>
</feature>
<dbReference type="EMBL" id="CR378680">
    <property type="protein sequence ID" value="CAG23698.1"/>
    <property type="molecule type" value="Genomic_DNA"/>
</dbReference>
<dbReference type="RefSeq" id="WP_011221839.1">
    <property type="nucleotide sequence ID" value="NC_006371.1"/>
</dbReference>
<dbReference type="SMR" id="Q6LG82"/>
<dbReference type="STRING" id="298386.PBPRB1848"/>
<dbReference type="KEGG" id="ppr:PBPRB1848"/>
<dbReference type="eggNOG" id="COG3633">
    <property type="taxonomic scope" value="Bacteria"/>
</dbReference>
<dbReference type="HOGENOM" id="CLU_044581_0_0_6"/>
<dbReference type="Proteomes" id="UP000000593">
    <property type="component" value="Chromosome 2"/>
</dbReference>
<dbReference type="GO" id="GO:0005886">
    <property type="term" value="C:plasma membrane"/>
    <property type="evidence" value="ECO:0007669"/>
    <property type="project" value="UniProtKB-SubCell"/>
</dbReference>
<dbReference type="GO" id="GO:0005295">
    <property type="term" value="F:neutral L-amino acid:sodium symporter activity"/>
    <property type="evidence" value="ECO:0007669"/>
    <property type="project" value="TreeGrafter"/>
</dbReference>
<dbReference type="GO" id="GO:0032329">
    <property type="term" value="P:serine transport"/>
    <property type="evidence" value="ECO:0007669"/>
    <property type="project" value="InterPro"/>
</dbReference>
<dbReference type="GO" id="GO:0015826">
    <property type="term" value="P:threonine transport"/>
    <property type="evidence" value="ECO:0007669"/>
    <property type="project" value="InterPro"/>
</dbReference>
<dbReference type="FunFam" id="1.10.3860.10:FF:000003">
    <property type="entry name" value="Serine/threonine transporter sstT"/>
    <property type="match status" value="1"/>
</dbReference>
<dbReference type="Gene3D" id="1.10.3860.10">
    <property type="entry name" value="Sodium:dicarboxylate symporter"/>
    <property type="match status" value="1"/>
</dbReference>
<dbReference type="HAMAP" id="MF_01582">
    <property type="entry name" value="Ser_Thr_transp_SstT"/>
    <property type="match status" value="1"/>
</dbReference>
<dbReference type="InterPro" id="IPR001991">
    <property type="entry name" value="Na-dicarboxylate_symporter"/>
</dbReference>
<dbReference type="InterPro" id="IPR036458">
    <property type="entry name" value="Na:dicarbo_symporter_sf"/>
</dbReference>
<dbReference type="InterPro" id="IPR023025">
    <property type="entry name" value="Ser_Thr_transp_SstT"/>
</dbReference>
<dbReference type="NCBIfam" id="NF010151">
    <property type="entry name" value="PRK13628.1"/>
    <property type="match status" value="1"/>
</dbReference>
<dbReference type="PANTHER" id="PTHR42865">
    <property type="entry name" value="PROTON/GLUTAMATE-ASPARTATE SYMPORTER"/>
    <property type="match status" value="1"/>
</dbReference>
<dbReference type="PANTHER" id="PTHR42865:SF8">
    <property type="entry name" value="SERINE_THREONINE TRANSPORTER SSTT"/>
    <property type="match status" value="1"/>
</dbReference>
<dbReference type="Pfam" id="PF00375">
    <property type="entry name" value="SDF"/>
    <property type="match status" value="1"/>
</dbReference>
<dbReference type="PRINTS" id="PR00173">
    <property type="entry name" value="EDTRNSPORT"/>
</dbReference>
<dbReference type="SUPFAM" id="SSF118215">
    <property type="entry name" value="Proton glutamate symport protein"/>
    <property type="match status" value="1"/>
</dbReference>
<keyword id="KW-0029">Amino-acid transport</keyword>
<keyword id="KW-0997">Cell inner membrane</keyword>
<keyword id="KW-1003">Cell membrane</keyword>
<keyword id="KW-0472">Membrane</keyword>
<keyword id="KW-1185">Reference proteome</keyword>
<keyword id="KW-0769">Symport</keyword>
<keyword id="KW-0812">Transmembrane</keyword>
<keyword id="KW-1133">Transmembrane helix</keyword>
<keyword id="KW-0813">Transport</keyword>
<organism>
    <name type="scientific">Photobacterium profundum (strain SS9)</name>
    <dbReference type="NCBI Taxonomy" id="298386"/>
    <lineage>
        <taxon>Bacteria</taxon>
        <taxon>Pseudomonadati</taxon>
        <taxon>Pseudomonadota</taxon>
        <taxon>Gammaproteobacteria</taxon>
        <taxon>Vibrionales</taxon>
        <taxon>Vibrionaceae</taxon>
        <taxon>Photobacterium</taxon>
    </lineage>
</organism>
<accession>Q6LG82</accession>
<reference key="1">
    <citation type="journal article" date="2005" name="Science">
        <title>Life at depth: Photobacterium profundum genome sequence and expression analysis.</title>
        <authorList>
            <person name="Vezzi A."/>
            <person name="Campanaro S."/>
            <person name="D'Angelo M."/>
            <person name="Simonato F."/>
            <person name="Vitulo N."/>
            <person name="Lauro F.M."/>
            <person name="Cestaro A."/>
            <person name="Malacrida G."/>
            <person name="Simionati B."/>
            <person name="Cannata N."/>
            <person name="Romualdi C."/>
            <person name="Bartlett D.H."/>
            <person name="Valle G."/>
        </authorList>
    </citation>
    <scope>NUCLEOTIDE SEQUENCE [LARGE SCALE GENOMIC DNA]</scope>
    <source>
        <strain>ATCC BAA-1253 / SS9</strain>
    </source>
</reference>
<gene>
    <name evidence="1" type="primary">sstT</name>
    <name type="ordered locus">PBPRB1848</name>
</gene>